<reference key="1">
    <citation type="journal article" date="2002" name="Nat. Genet.">
        <title>Genome sequence of the endocellular obligate symbiont of tsetse flies, Wigglesworthia glossinidia.</title>
        <authorList>
            <person name="Akman L."/>
            <person name="Yamashita A."/>
            <person name="Watanabe H."/>
            <person name="Oshima K."/>
            <person name="Shiba T."/>
            <person name="Hattori M."/>
            <person name="Aksoy S."/>
        </authorList>
    </citation>
    <scope>NUCLEOTIDE SEQUENCE [LARGE SCALE GENOMIC DNA]</scope>
</reference>
<keyword id="KW-0963">Cytoplasm</keyword>
<keyword id="KW-1185">Reference proteome</keyword>
<keyword id="KW-0690">Ribosome biogenesis</keyword>
<comment type="function">
    <text evidence="1">One of several proteins that assist in the late maturation steps of the functional core of the 30S ribosomal subunit. Associates with free 30S ribosomal subunits (but not with 30S subunits that are part of 70S ribosomes or polysomes). Required for efficient processing of 16S rRNA. May interact with the 5'-terminal helix region of 16S rRNA.</text>
</comment>
<comment type="subunit">
    <text evidence="1">Monomer. Binds 30S ribosomal subunits, but not 50S ribosomal subunits or 70S ribosomes.</text>
</comment>
<comment type="subcellular location">
    <subcellularLocation>
        <location evidence="1">Cytoplasm</location>
    </subcellularLocation>
</comment>
<comment type="similarity">
    <text evidence="1">Belongs to the RbfA family.</text>
</comment>
<organism>
    <name type="scientific">Wigglesworthia glossinidia brevipalpis</name>
    <dbReference type="NCBI Taxonomy" id="36870"/>
    <lineage>
        <taxon>Bacteria</taxon>
        <taxon>Pseudomonadati</taxon>
        <taxon>Pseudomonadota</taxon>
        <taxon>Gammaproteobacteria</taxon>
        <taxon>Enterobacterales</taxon>
        <taxon>Erwiniaceae</taxon>
        <taxon>Wigglesworthia</taxon>
    </lineage>
</organism>
<sequence length="125" mass="14569">MHSRENNRKFKISKEIQRKIALILQQKINDPRIGISTVSGVDLSSDFSHAKIFVTFLNKNTKQQIKSGLFILNKASFFIRKILNKTMRLRIIPKLTFIYDYSLIKGRNIDDLFNNNIVKISKKSI</sequence>
<name>RBFA_WIGBR</name>
<protein>
    <recommendedName>
        <fullName evidence="1">Ribosome-binding factor A</fullName>
    </recommendedName>
</protein>
<proteinExistence type="inferred from homology"/>
<accession>Q8D2X7</accession>
<dbReference type="EMBL" id="BA000021">
    <property type="protein sequence ID" value="BAC24371.1"/>
    <property type="molecule type" value="Genomic_DNA"/>
</dbReference>
<dbReference type="SMR" id="Q8D2X7"/>
<dbReference type="STRING" id="36870.gene:10368713"/>
<dbReference type="KEGG" id="wbr:rbfA"/>
<dbReference type="eggNOG" id="COG0858">
    <property type="taxonomic scope" value="Bacteria"/>
</dbReference>
<dbReference type="HOGENOM" id="CLU_089475_5_0_6"/>
<dbReference type="OrthoDB" id="307788at2"/>
<dbReference type="Proteomes" id="UP000000562">
    <property type="component" value="Chromosome"/>
</dbReference>
<dbReference type="GO" id="GO:0005829">
    <property type="term" value="C:cytosol"/>
    <property type="evidence" value="ECO:0007669"/>
    <property type="project" value="TreeGrafter"/>
</dbReference>
<dbReference type="GO" id="GO:0043024">
    <property type="term" value="F:ribosomal small subunit binding"/>
    <property type="evidence" value="ECO:0007669"/>
    <property type="project" value="TreeGrafter"/>
</dbReference>
<dbReference type="GO" id="GO:0030490">
    <property type="term" value="P:maturation of SSU-rRNA"/>
    <property type="evidence" value="ECO:0007669"/>
    <property type="project" value="UniProtKB-UniRule"/>
</dbReference>
<dbReference type="Gene3D" id="3.30.300.20">
    <property type="match status" value="1"/>
</dbReference>
<dbReference type="HAMAP" id="MF_00003">
    <property type="entry name" value="RbfA"/>
    <property type="match status" value="1"/>
</dbReference>
<dbReference type="InterPro" id="IPR015946">
    <property type="entry name" value="KH_dom-like_a/b"/>
</dbReference>
<dbReference type="InterPro" id="IPR000238">
    <property type="entry name" value="RbfA"/>
</dbReference>
<dbReference type="InterPro" id="IPR023799">
    <property type="entry name" value="RbfA_dom_sf"/>
</dbReference>
<dbReference type="InterPro" id="IPR020053">
    <property type="entry name" value="Ribosome-bd_factorA_CS"/>
</dbReference>
<dbReference type="NCBIfam" id="TIGR00082">
    <property type="entry name" value="rbfA"/>
    <property type="match status" value="1"/>
</dbReference>
<dbReference type="PANTHER" id="PTHR33515">
    <property type="entry name" value="RIBOSOME-BINDING FACTOR A, CHLOROPLASTIC-RELATED"/>
    <property type="match status" value="1"/>
</dbReference>
<dbReference type="PANTHER" id="PTHR33515:SF1">
    <property type="entry name" value="RIBOSOME-BINDING FACTOR A, CHLOROPLASTIC-RELATED"/>
    <property type="match status" value="1"/>
</dbReference>
<dbReference type="Pfam" id="PF02033">
    <property type="entry name" value="RBFA"/>
    <property type="match status" value="1"/>
</dbReference>
<dbReference type="SUPFAM" id="SSF89919">
    <property type="entry name" value="Ribosome-binding factor A, RbfA"/>
    <property type="match status" value="1"/>
</dbReference>
<dbReference type="PROSITE" id="PS01319">
    <property type="entry name" value="RBFA"/>
    <property type="match status" value="1"/>
</dbReference>
<feature type="chain" id="PRO_0000102770" description="Ribosome-binding factor A">
    <location>
        <begin position="1"/>
        <end position="125"/>
    </location>
</feature>
<evidence type="ECO:0000255" key="1">
    <source>
        <dbReference type="HAMAP-Rule" id="MF_00003"/>
    </source>
</evidence>
<gene>
    <name evidence="1" type="primary">rbfA</name>
    <name type="ordered locus">WIGBR2250</name>
</gene>